<accession>P53211</accession>
<accession>I2HB60</accession>
<proteinExistence type="predicted"/>
<gene>
    <name type="ordered locus">YGR018C</name>
</gene>
<feature type="chain" id="PRO_0000202785" description="Uncharacterized protein YGR018C">
    <location>
        <begin position="1"/>
        <end position="109"/>
    </location>
</feature>
<name>YG1C_YEAST</name>
<organism>
    <name type="scientific">Saccharomyces cerevisiae (strain ATCC 204508 / S288c)</name>
    <name type="common">Baker's yeast</name>
    <dbReference type="NCBI Taxonomy" id="559292"/>
    <lineage>
        <taxon>Eukaryota</taxon>
        <taxon>Fungi</taxon>
        <taxon>Dikarya</taxon>
        <taxon>Ascomycota</taxon>
        <taxon>Saccharomycotina</taxon>
        <taxon>Saccharomycetes</taxon>
        <taxon>Saccharomycetales</taxon>
        <taxon>Saccharomycetaceae</taxon>
        <taxon>Saccharomyces</taxon>
    </lineage>
</organism>
<reference key="1">
    <citation type="journal article" date="1997" name="Yeast">
        <title>Sequence analysis of 203 kilobases from Saccharomyces cerevisiae chromosome VII.</title>
        <authorList>
            <person name="Rieger M."/>
            <person name="Brueckner M."/>
            <person name="Schaefer M."/>
            <person name="Mueller-Auer S."/>
        </authorList>
    </citation>
    <scope>NUCLEOTIDE SEQUENCE [GENOMIC DNA]</scope>
    <source>
        <strain>ATCC 204508 / S288c</strain>
    </source>
</reference>
<reference key="2">
    <citation type="journal article" date="1997" name="Nature">
        <title>The nucleotide sequence of Saccharomyces cerevisiae chromosome VII.</title>
        <authorList>
            <person name="Tettelin H."/>
            <person name="Agostoni-Carbone M.L."/>
            <person name="Albermann K."/>
            <person name="Albers M."/>
            <person name="Arroyo J."/>
            <person name="Backes U."/>
            <person name="Barreiros T."/>
            <person name="Bertani I."/>
            <person name="Bjourson A.J."/>
            <person name="Brueckner M."/>
            <person name="Bruschi C.V."/>
            <person name="Carignani G."/>
            <person name="Castagnoli L."/>
            <person name="Cerdan E."/>
            <person name="Clemente M.L."/>
            <person name="Coblenz A."/>
            <person name="Coglievina M."/>
            <person name="Coissac E."/>
            <person name="Defoor E."/>
            <person name="Del Bino S."/>
            <person name="Delius H."/>
            <person name="Delneri D."/>
            <person name="de Wergifosse P."/>
            <person name="Dujon B."/>
            <person name="Durand P."/>
            <person name="Entian K.-D."/>
            <person name="Eraso P."/>
            <person name="Escribano V."/>
            <person name="Fabiani L."/>
            <person name="Fartmann B."/>
            <person name="Feroli F."/>
            <person name="Feuermann M."/>
            <person name="Frontali L."/>
            <person name="Garcia-Gonzalez M."/>
            <person name="Garcia-Saez M.I."/>
            <person name="Goffeau A."/>
            <person name="Guerreiro P."/>
            <person name="Hani J."/>
            <person name="Hansen M."/>
            <person name="Hebling U."/>
            <person name="Hernandez K."/>
            <person name="Heumann K."/>
            <person name="Hilger F."/>
            <person name="Hofmann B."/>
            <person name="Indge K.J."/>
            <person name="James C.M."/>
            <person name="Klima R."/>
            <person name="Koetter P."/>
            <person name="Kramer B."/>
            <person name="Kramer W."/>
            <person name="Lauquin G."/>
            <person name="Leuther H."/>
            <person name="Louis E.J."/>
            <person name="Maillier E."/>
            <person name="Marconi A."/>
            <person name="Martegani E."/>
            <person name="Mazon M.J."/>
            <person name="Mazzoni C."/>
            <person name="McReynolds A.D.K."/>
            <person name="Melchioretto P."/>
            <person name="Mewes H.-W."/>
            <person name="Minenkova O."/>
            <person name="Mueller-Auer S."/>
            <person name="Nawrocki A."/>
            <person name="Netter P."/>
            <person name="Neu R."/>
            <person name="Nombela C."/>
            <person name="Oliver S.G."/>
            <person name="Panzeri L."/>
            <person name="Paoluzi S."/>
            <person name="Plevani P."/>
            <person name="Portetelle D."/>
            <person name="Portillo F."/>
            <person name="Potier S."/>
            <person name="Purnelle B."/>
            <person name="Rieger M."/>
            <person name="Riles L."/>
            <person name="Rinaldi T."/>
            <person name="Robben J."/>
            <person name="Rodrigues-Pousada C."/>
            <person name="Rodriguez-Belmonte E."/>
            <person name="Rodriguez-Torres A.M."/>
            <person name="Rose M."/>
            <person name="Ruzzi M."/>
            <person name="Saliola M."/>
            <person name="Sanchez-Perez M."/>
            <person name="Schaefer B."/>
            <person name="Schaefer M."/>
            <person name="Scharfe M."/>
            <person name="Schmidheini T."/>
            <person name="Schreer A."/>
            <person name="Skala J."/>
            <person name="Souciet J.-L."/>
            <person name="Steensma H.Y."/>
            <person name="Talla E."/>
            <person name="Thierry A."/>
            <person name="Vandenbol M."/>
            <person name="van der Aart Q.J.M."/>
            <person name="Van Dyck L."/>
            <person name="Vanoni M."/>
            <person name="Verhasselt P."/>
            <person name="Voet M."/>
            <person name="Volckaert G."/>
            <person name="Wambutt R."/>
            <person name="Watson M.D."/>
            <person name="Weber N."/>
            <person name="Wedler E."/>
            <person name="Wedler H."/>
            <person name="Wipfli P."/>
            <person name="Wolf K."/>
            <person name="Wright L.F."/>
            <person name="Zaccaria P."/>
            <person name="Zimmermann M."/>
            <person name="Zollner A."/>
            <person name="Kleine K."/>
        </authorList>
    </citation>
    <scope>NUCLEOTIDE SEQUENCE [LARGE SCALE GENOMIC DNA]</scope>
    <source>
        <strain>ATCC 204508 / S288c</strain>
    </source>
</reference>
<reference key="3">
    <citation type="journal article" date="2014" name="G3 (Bethesda)">
        <title>The reference genome sequence of Saccharomyces cerevisiae: Then and now.</title>
        <authorList>
            <person name="Engel S.R."/>
            <person name="Dietrich F.S."/>
            <person name="Fisk D.G."/>
            <person name="Binkley G."/>
            <person name="Balakrishnan R."/>
            <person name="Costanzo M.C."/>
            <person name="Dwight S.S."/>
            <person name="Hitz B.C."/>
            <person name="Karra K."/>
            <person name="Nash R.S."/>
            <person name="Weng S."/>
            <person name="Wong E.D."/>
            <person name="Lloyd P."/>
            <person name="Skrzypek M.S."/>
            <person name="Miyasato S.R."/>
            <person name="Simison M."/>
            <person name="Cherry J.M."/>
        </authorList>
    </citation>
    <scope>GENOME REANNOTATION</scope>
    <source>
        <strain>ATCC 204508 / S288c</strain>
    </source>
</reference>
<reference key="4">
    <citation type="journal article" date="2012" name="Science">
        <title>High-resolution view of the yeast meiotic program revealed by ribosome profiling.</title>
        <authorList>
            <person name="Brar G.A."/>
            <person name="Yassour M."/>
            <person name="Friedman N."/>
            <person name="Regev A."/>
            <person name="Ingolia N.T."/>
            <person name="Weissman J.S."/>
        </authorList>
    </citation>
    <scope>IDENTIFICATION</scope>
</reference>
<sequence>MIDISHGHTSCSSHRSSSLPSVFWKIHLSPPLPSFKFKKSTESTQRQTIPKFSSPASSLAPSTPLWSLSSCLLVSEVSFWPGAGFLYNDLVCLDREDHCLSNSASHSCG</sequence>
<keyword id="KW-1185">Reference proteome</keyword>
<dbReference type="EMBL" id="Z72802">
    <property type="protein sequence ID" value="CAA97001.1"/>
    <property type="molecule type" value="Genomic_DNA"/>
</dbReference>
<dbReference type="EMBL" id="BK006941">
    <property type="protein sequence ID" value="DAA35110.1"/>
    <property type="molecule type" value="Genomic_DNA"/>
</dbReference>
<dbReference type="PIR" id="S64309">
    <property type="entry name" value="S64309"/>
</dbReference>
<dbReference type="RefSeq" id="NP_001257676.1">
    <property type="nucleotide sequence ID" value="NM_001270747.1"/>
</dbReference>
<dbReference type="BioGRID" id="300601">
    <property type="interactions" value="30"/>
</dbReference>
<dbReference type="DIP" id="DIP-5107N"/>
<dbReference type="FunCoup" id="P53211">
    <property type="interactions" value="23"/>
</dbReference>
<dbReference type="IntAct" id="P53211">
    <property type="interactions" value="2"/>
</dbReference>
<dbReference type="PaxDb" id="4932-YGR018C"/>
<dbReference type="EnsemblFungi" id="YGR018C_mRNA">
    <property type="protein sequence ID" value="YGR018C"/>
    <property type="gene ID" value="YGR018C"/>
</dbReference>
<dbReference type="GeneID" id="852901"/>
<dbReference type="KEGG" id="sce:YGR018C"/>
<dbReference type="AGR" id="SGD:S000003250"/>
<dbReference type="SGD" id="S000003250">
    <property type="gene designation" value="YGR018C"/>
</dbReference>
<dbReference type="VEuPathDB" id="FungiDB:YGR018C"/>
<dbReference type="HOGENOM" id="CLU_2185456_0_0_1"/>
<dbReference type="InParanoid" id="P53211"/>
<dbReference type="OrthoDB" id="10368063at2759"/>
<dbReference type="BioCyc" id="YEAST:G3O-30745-MONOMER"/>
<dbReference type="BioGRID-ORCS" id="852901">
    <property type="hits" value="2 hits in 10 CRISPR screens"/>
</dbReference>
<dbReference type="PRO" id="PR:P53211"/>
<dbReference type="Proteomes" id="UP000002311">
    <property type="component" value="Chromosome VII"/>
</dbReference>
<dbReference type="RNAct" id="P53211">
    <property type="molecule type" value="protein"/>
</dbReference>
<protein>
    <recommendedName>
        <fullName>Uncharacterized protein YGR018C</fullName>
    </recommendedName>
</protein>